<dbReference type="EMBL" id="M15202">
    <property type="protein sequence ID" value="AAA96440.1"/>
    <property type="molecule type" value="Genomic_DNA"/>
</dbReference>
<dbReference type="EMBL" id="M15202">
    <property type="protein sequence ID" value="AAA96441.1"/>
    <property type="molecule type" value="Genomic_DNA"/>
</dbReference>
<dbReference type="EMBL" id="M15202">
    <property type="protein sequence ID" value="AAA96442.1"/>
    <property type="molecule type" value="Genomic_DNA"/>
</dbReference>
<dbReference type="EMBL" id="M15202">
    <property type="protein sequence ID" value="AAA96443.1"/>
    <property type="molecule type" value="Genomic_DNA"/>
</dbReference>
<dbReference type="EMBL" id="M15202">
    <property type="protein sequence ID" value="AAA96444.1"/>
    <property type="molecule type" value="Genomic_DNA"/>
</dbReference>
<dbReference type="EMBL" id="M15202">
    <property type="protein sequence ID" value="AAA96445.1"/>
    <property type="molecule type" value="Genomic_DNA"/>
</dbReference>
<dbReference type="EMBL" id="M15202">
    <property type="protein sequence ID" value="AAA96446.1"/>
    <property type="molecule type" value="Genomic_DNA"/>
</dbReference>
<dbReference type="EMBL" id="M15202">
    <property type="protein sequence ID" value="AAA96447.1"/>
    <property type="molecule type" value="Genomic_DNA"/>
</dbReference>
<dbReference type="EMBL" id="M15202">
    <property type="protein sequence ID" value="AAA96448.1"/>
    <property type="molecule type" value="Genomic_DNA"/>
</dbReference>
<dbReference type="EMBL" id="M15202">
    <property type="protein sequence ID" value="AAA96449.1"/>
    <property type="molecule type" value="Genomic_DNA"/>
</dbReference>
<dbReference type="EMBL" id="M15202">
    <property type="protein sequence ID" value="AAA96450.1"/>
    <property type="molecule type" value="Genomic_DNA"/>
</dbReference>
<dbReference type="EMBL" id="M15202">
    <property type="protein sequence ID" value="AAA96451.1"/>
    <property type="molecule type" value="Genomic_DNA"/>
</dbReference>
<dbReference type="EMBL" id="M15202">
    <property type="protein sequence ID" value="AAA96452.1"/>
    <property type="molecule type" value="Genomic_DNA"/>
</dbReference>
<dbReference type="EMBL" id="M15202">
    <property type="protein sequence ID" value="AAA96453.1"/>
    <property type="molecule type" value="Genomic_DNA"/>
</dbReference>
<dbReference type="EMBL" id="M15202">
    <property type="protein sequence ID" value="AAA96454.1"/>
    <property type="molecule type" value="Genomic_DNA"/>
</dbReference>
<dbReference type="EMBL" id="M15202">
    <property type="protein sequence ID" value="AAA96455.1"/>
    <property type="molecule type" value="Genomic_DNA"/>
</dbReference>
<dbReference type="EMBL" id="M15202">
    <property type="protein sequence ID" value="AAA96456.1"/>
    <property type="molecule type" value="Genomic_DNA"/>
</dbReference>
<dbReference type="EMBL" id="M15202">
    <property type="protein sequence ID" value="AAA96457.1"/>
    <property type="molecule type" value="Genomic_DNA"/>
</dbReference>
<dbReference type="EMBL" id="M15202">
    <property type="protein sequence ID" value="AAA96458.1"/>
    <property type="molecule type" value="Genomic_DNA"/>
</dbReference>
<dbReference type="EMBL" id="M15202">
    <property type="protein sequence ID" value="AAA96459.1"/>
    <property type="molecule type" value="Genomic_DNA"/>
</dbReference>
<dbReference type="EMBL" id="M15202">
    <property type="protein sequence ID" value="AAA96460.1"/>
    <property type="molecule type" value="Genomic_DNA"/>
</dbReference>
<dbReference type="EMBL" id="M15202">
    <property type="protein sequence ID" value="AAA96461.1"/>
    <property type="molecule type" value="Genomic_DNA"/>
</dbReference>
<dbReference type="EMBL" id="M15202">
    <property type="protein sequence ID" value="AAA96462.1"/>
    <property type="molecule type" value="Genomic_DNA"/>
</dbReference>
<dbReference type="EMBL" id="M15202">
    <property type="protein sequence ID" value="AAA96463.1"/>
    <property type="molecule type" value="Genomic_DNA"/>
</dbReference>
<dbReference type="EMBL" id="M15202">
    <property type="protein sequence ID" value="AAA96464.1"/>
    <property type="molecule type" value="Genomic_DNA"/>
</dbReference>
<dbReference type="EMBL" id="M15202">
    <property type="protein sequence ID" value="AAA96465.1"/>
    <property type="molecule type" value="Genomic_DNA"/>
</dbReference>
<dbReference type="EMBL" id="M15202">
    <property type="protein sequence ID" value="AAA96466.1"/>
    <property type="molecule type" value="Genomic_DNA"/>
</dbReference>
<dbReference type="EMBL" id="M15202">
    <property type="protein sequence ID" value="AAA96467.1"/>
    <property type="molecule type" value="Genomic_DNA"/>
</dbReference>
<dbReference type="EMBL" id="M15202">
    <property type="protein sequence ID" value="AAA96468.1"/>
    <property type="molecule type" value="Genomic_DNA"/>
</dbReference>
<dbReference type="EMBL" id="M15202">
    <property type="protein sequence ID" value="AAA96469.1"/>
    <property type="molecule type" value="Genomic_DNA"/>
</dbReference>
<dbReference type="EMBL" id="M15202">
    <property type="protein sequence ID" value="AAA96470.1"/>
    <property type="molecule type" value="Genomic_DNA"/>
</dbReference>
<dbReference type="EMBL" id="M15202">
    <property type="protein sequence ID" value="AAA96471.1"/>
    <property type="molecule type" value="Genomic_DNA"/>
</dbReference>
<dbReference type="EMBL" id="M15202">
    <property type="protein sequence ID" value="AAA96472.1"/>
    <property type="molecule type" value="Genomic_DNA"/>
</dbReference>
<dbReference type="EMBL" id="M15202">
    <property type="protein sequence ID" value="AAA96473.1"/>
    <property type="molecule type" value="Genomic_DNA"/>
</dbReference>
<dbReference type="EMBL" id="M15202">
    <property type="protein sequence ID" value="AAA96474.1"/>
    <property type="molecule type" value="Genomic_DNA"/>
</dbReference>
<dbReference type="EMBL" id="M15202">
    <property type="protein sequence ID" value="AAA96475.1"/>
    <property type="molecule type" value="Genomic_DNA"/>
</dbReference>
<dbReference type="EMBL" id="M15202">
    <property type="protein sequence ID" value="AAA96476.1"/>
    <property type="molecule type" value="Genomic_DNA"/>
</dbReference>
<dbReference type="EMBL" id="M15202">
    <property type="protein sequence ID" value="AAA96477.1"/>
    <property type="molecule type" value="Genomic_DNA"/>
</dbReference>
<dbReference type="EMBL" id="M15202">
    <property type="protein sequence ID" value="AAA96478.1"/>
    <property type="molecule type" value="Genomic_DNA"/>
</dbReference>
<dbReference type="EMBL" id="M15202">
    <property type="protein sequence ID" value="AAA96479.1"/>
    <property type="molecule type" value="Genomic_DNA"/>
</dbReference>
<dbReference type="EMBL" id="M15202">
    <property type="protein sequence ID" value="AAA96480.1"/>
    <property type="molecule type" value="Genomic_DNA"/>
</dbReference>
<dbReference type="EMBL" id="M15202">
    <property type="protein sequence ID" value="AAA96481.1"/>
    <property type="molecule type" value="Genomic_DNA"/>
</dbReference>
<dbReference type="EMBL" id="M15202">
    <property type="protein sequence ID" value="AAA96482.1"/>
    <property type="molecule type" value="Genomic_DNA"/>
</dbReference>
<dbReference type="EMBL" id="M15202">
    <property type="protein sequence ID" value="AAA96483.1"/>
    <property type="molecule type" value="Genomic_DNA"/>
</dbReference>
<dbReference type="EMBL" id="DQ062204">
    <property type="protein sequence ID" value="AAY59901.1"/>
    <property type="molecule type" value="mRNA"/>
</dbReference>
<dbReference type="EMBL" id="DQ273678">
    <property type="protein sequence ID" value="ABB51539.1"/>
    <property type="molecule type" value="mRNA"/>
</dbReference>
<dbReference type="PIR" id="A24824">
    <property type="entry name" value="A24824"/>
</dbReference>
<dbReference type="RefSeq" id="NP_001257593.1">
    <property type="nucleotide sequence ID" value="NM_001270664.1"/>
</dbReference>
<dbReference type="RefSeq" id="NP_001257594.1">
    <molecule id="P09739-1"/>
    <property type="nucleotide sequence ID" value="NM_001270665.1"/>
</dbReference>
<dbReference type="RefSeq" id="NP_001257595.1">
    <property type="nucleotide sequence ID" value="NM_001270666.1"/>
</dbReference>
<dbReference type="RefSeq" id="NP_001257597.1">
    <property type="nucleotide sequence ID" value="NM_001270668.1"/>
</dbReference>
<dbReference type="RefSeq" id="NP_001257599.1">
    <property type="nucleotide sequence ID" value="NM_001270670.1"/>
</dbReference>
<dbReference type="RefSeq" id="NP_001257600.1">
    <molecule id="P09739-3"/>
    <property type="nucleotide sequence ID" value="NM_001270671.1"/>
</dbReference>
<dbReference type="RefSeq" id="NP_001257602.1">
    <molecule id="P09739-7"/>
    <property type="nucleotide sequence ID" value="NM_001270673.1"/>
</dbReference>
<dbReference type="RefSeq" id="NP_001257605.1">
    <property type="nucleotide sequence ID" value="NM_001270676.1"/>
</dbReference>
<dbReference type="RefSeq" id="NP_001257607.1">
    <property type="nucleotide sequence ID" value="NM_001270678.1"/>
</dbReference>
<dbReference type="RefSeq" id="NP_113720.1">
    <molecule id="P09739-6"/>
    <property type="nucleotide sequence ID" value="NM_031532.2"/>
</dbReference>
<dbReference type="RefSeq" id="XP_006230743.1">
    <property type="nucleotide sequence ID" value="XM_006230681.3"/>
</dbReference>
<dbReference type="RefSeq" id="XP_006230745.1">
    <property type="nucleotide sequence ID" value="XM_006230683.3"/>
</dbReference>
<dbReference type="RefSeq" id="XP_006230747.1">
    <property type="nucleotide sequence ID" value="XM_006230685.3"/>
</dbReference>
<dbReference type="RefSeq" id="XP_006230748.1">
    <property type="nucleotide sequence ID" value="XM_006230686.3"/>
</dbReference>
<dbReference type="RefSeq" id="XP_017444281.1">
    <property type="nucleotide sequence ID" value="XM_017588792.1"/>
</dbReference>
<dbReference type="RefSeq" id="XP_017444282.1">
    <property type="nucleotide sequence ID" value="XM_017588793.1"/>
</dbReference>
<dbReference type="RefSeq" id="XP_017444283.1">
    <property type="nucleotide sequence ID" value="XM_017588794.1"/>
</dbReference>
<dbReference type="BMRB" id="P09739"/>
<dbReference type="SMR" id="P09739"/>
<dbReference type="BioGRID" id="246956">
    <property type="interactions" value="1"/>
</dbReference>
<dbReference type="FunCoup" id="P09739">
    <property type="interactions" value="20"/>
</dbReference>
<dbReference type="STRING" id="10116.ENSRNOP00000049386"/>
<dbReference type="iPTMnet" id="P09739"/>
<dbReference type="PhosphoSitePlus" id="P09739"/>
<dbReference type="PaxDb" id="10116-ENSRNOP00000049386"/>
<dbReference type="GeneID" id="24838"/>
<dbReference type="KEGG" id="rno:24838"/>
<dbReference type="UCSC" id="RGD:3883">
    <molecule id="P09739-1"/>
    <property type="organism name" value="rat"/>
</dbReference>
<dbReference type="AGR" id="RGD:3883"/>
<dbReference type="CTD" id="7140"/>
<dbReference type="RGD" id="3883">
    <property type="gene designation" value="Tnnt3"/>
</dbReference>
<dbReference type="VEuPathDB" id="HostDB:ENSRNOG00000020332"/>
<dbReference type="eggNOG" id="KOG3634">
    <property type="taxonomic scope" value="Eukaryota"/>
</dbReference>
<dbReference type="HOGENOM" id="CLU_076377_1_0_1"/>
<dbReference type="InParanoid" id="P09739"/>
<dbReference type="PhylomeDB" id="P09739"/>
<dbReference type="Reactome" id="R-RNO-390522">
    <property type="pathway name" value="Striated Muscle Contraction"/>
</dbReference>
<dbReference type="PRO" id="PR:P09739"/>
<dbReference type="Proteomes" id="UP000002494">
    <property type="component" value="Chromosome 1"/>
</dbReference>
<dbReference type="Bgee" id="ENSRNOG00000020332">
    <property type="expression patterns" value="Expressed in quadriceps femoris and 16 other cell types or tissues"/>
</dbReference>
<dbReference type="ExpressionAtlas" id="P09739">
    <property type="expression patterns" value="baseline and differential"/>
</dbReference>
<dbReference type="GO" id="GO:0005861">
    <property type="term" value="C:troponin complex"/>
    <property type="evidence" value="ECO:0000314"/>
    <property type="project" value="RGD"/>
</dbReference>
<dbReference type="GO" id="GO:0048306">
    <property type="term" value="F:calcium-dependent protein binding"/>
    <property type="evidence" value="ECO:0000266"/>
    <property type="project" value="RGD"/>
</dbReference>
<dbReference type="GO" id="GO:0005523">
    <property type="term" value="F:tropomyosin binding"/>
    <property type="evidence" value="ECO:0000266"/>
    <property type="project" value="RGD"/>
</dbReference>
<dbReference type="GO" id="GO:0030172">
    <property type="term" value="F:troponin C binding"/>
    <property type="evidence" value="ECO:0000266"/>
    <property type="project" value="RGD"/>
</dbReference>
<dbReference type="GO" id="GO:0031013">
    <property type="term" value="F:troponin I binding"/>
    <property type="evidence" value="ECO:0000266"/>
    <property type="project" value="RGD"/>
</dbReference>
<dbReference type="GO" id="GO:0031014">
    <property type="term" value="F:troponin T binding"/>
    <property type="evidence" value="ECO:0000303"/>
    <property type="project" value="RGD"/>
</dbReference>
<dbReference type="GO" id="GO:0006936">
    <property type="term" value="P:muscle contraction"/>
    <property type="evidence" value="ECO:0000304"/>
    <property type="project" value="RGD"/>
</dbReference>
<dbReference type="GO" id="GO:0006942">
    <property type="term" value="P:regulation of striated muscle contraction"/>
    <property type="evidence" value="ECO:0000315"/>
    <property type="project" value="RGD"/>
</dbReference>
<dbReference type="GO" id="GO:0003009">
    <property type="term" value="P:skeletal muscle contraction"/>
    <property type="evidence" value="ECO:0000266"/>
    <property type="project" value="RGD"/>
</dbReference>
<dbReference type="FunFam" id="1.20.5.350:FF:000001">
    <property type="entry name" value="Troponin T, fast skeletal muscle"/>
    <property type="match status" value="1"/>
</dbReference>
<dbReference type="Gene3D" id="1.20.5.350">
    <property type="match status" value="1"/>
</dbReference>
<dbReference type="InterPro" id="IPR027707">
    <property type="entry name" value="TNNT"/>
</dbReference>
<dbReference type="InterPro" id="IPR001978">
    <property type="entry name" value="Troponin"/>
</dbReference>
<dbReference type="InterPro" id="IPR038077">
    <property type="entry name" value="Troponin_sf"/>
</dbReference>
<dbReference type="PANTHER" id="PTHR11521">
    <property type="entry name" value="TROPONIN T"/>
    <property type="match status" value="1"/>
</dbReference>
<dbReference type="PANTHER" id="PTHR11521:SF4">
    <property type="entry name" value="TROPONIN T, FAST SKELETAL MUSCLE"/>
    <property type="match status" value="1"/>
</dbReference>
<dbReference type="Pfam" id="PF00992">
    <property type="entry name" value="Troponin"/>
    <property type="match status" value="1"/>
</dbReference>
<dbReference type="SUPFAM" id="SSF90250">
    <property type="entry name" value="Troponin coil-coiled subunits"/>
    <property type="match status" value="1"/>
</dbReference>
<evidence type="ECO:0000250" key="1">
    <source>
        <dbReference type="UniProtKB" id="P02641"/>
    </source>
</evidence>
<evidence type="ECO:0000256" key="2">
    <source>
        <dbReference type="SAM" id="MobiDB-lite"/>
    </source>
</evidence>
<evidence type="ECO:0000269" key="3">
    <source>
    </source>
</evidence>
<evidence type="ECO:0000269" key="4">
    <source>
    </source>
</evidence>
<evidence type="ECO:0000269" key="5">
    <source>
    </source>
</evidence>
<evidence type="ECO:0000303" key="6">
    <source>
    </source>
</evidence>
<evidence type="ECO:0000305" key="7"/>
<evidence type="ECO:0007744" key="8">
    <source>
    </source>
</evidence>
<sequence>MSDEETEQVEEQYEEEEEAQEEEVQEEAPEPEEVQEEEKPRPKLTAPKIPEGEKVDFDDIQKKRQNKDLMELQALIDSHFEARKKEEEELIALKERIEKRRAERAEQQRIRAEKERERQNRLAEEKARREEEDAKRRAEDDLKKKKALSSMGANYSSYLAKADQKRGKKQTAREMKKKILAERRKPLNIDHLSDDKLRDKAKELWDTLYQLETDKFEFGEKLKRQKYDITTLRSRIDQAQKHSKKAGATAKGKVGGRWK</sequence>
<feature type="initiator methionine" description="Removed" evidence="1">
    <location>
        <position position="1"/>
    </location>
</feature>
<feature type="chain" id="PRO_0000186181" description="Troponin T, fast skeletal muscle">
    <location>
        <begin position="2"/>
        <end position="259"/>
    </location>
</feature>
<feature type="region of interest" description="Disordered" evidence="2">
    <location>
        <begin position="1"/>
        <end position="62"/>
    </location>
</feature>
<feature type="region of interest" description="Disordered" evidence="2">
    <location>
        <begin position="101"/>
        <end position="180"/>
    </location>
</feature>
<feature type="region of interest" description="Disordered" evidence="2">
    <location>
        <begin position="235"/>
        <end position="259"/>
    </location>
</feature>
<feature type="compositionally biased region" description="Acidic residues" evidence="2">
    <location>
        <begin position="1"/>
        <end position="36"/>
    </location>
</feature>
<feature type="compositionally biased region" description="Basic and acidic residues" evidence="2">
    <location>
        <begin position="50"/>
        <end position="62"/>
    </location>
</feature>
<feature type="compositionally biased region" description="Basic and acidic residues" evidence="2">
    <location>
        <begin position="101"/>
        <end position="143"/>
    </location>
</feature>
<feature type="compositionally biased region" description="Basic and acidic residues" evidence="2">
    <location>
        <begin position="171"/>
        <end position="180"/>
    </location>
</feature>
<feature type="modified residue" description="N-acetylserine" evidence="1">
    <location>
        <position position="2"/>
    </location>
</feature>
<feature type="modified residue" description="Phosphoserine" evidence="8">
    <location>
        <position position="2"/>
    </location>
</feature>
<feature type="modified residue" description="Phosphoserine" evidence="8">
    <location>
        <position position="78"/>
    </location>
</feature>
<feature type="modified residue" description="Phosphoserine" evidence="8">
    <location>
        <position position="149"/>
    </location>
</feature>
<feature type="modified residue" description="Phosphoserine" evidence="8">
    <location>
        <position position="156"/>
    </location>
</feature>
<feature type="modified residue" description="Phosphoserine" evidence="8">
    <location>
        <position position="157"/>
    </location>
</feature>
<feature type="modified residue" description="Phosphoserine" evidence="8">
    <location>
        <position position="193"/>
    </location>
</feature>
<feature type="modified residue" description="Phosphotyrosine" evidence="8">
    <location>
        <position position="209"/>
    </location>
</feature>
<feature type="splice variant" id="VSP_006658" description="In isoform 3." evidence="7">
    <location>
        <begin position="10"/>
        <end position="15"/>
    </location>
</feature>
<feature type="splice variant" id="VSP_006659" description="In isoform 4." evidence="7">
    <location>
        <begin position="16"/>
        <end position="21"/>
    </location>
</feature>
<feature type="splice variant" id="VSP_006660" description="In isoform 5." evidence="7">
    <location>
        <begin position="22"/>
        <end position="26"/>
    </location>
</feature>
<feature type="splice variant" id="VSP_006661" description="In isoform 6." evidence="7">
    <location>
        <begin position="28"/>
        <end position="31"/>
    </location>
</feature>
<feature type="splice variant" id="VSP_006663" description="In isoform 7." evidence="7">
    <location>
        <begin position="32"/>
        <end position="36"/>
    </location>
</feature>
<feature type="splice variant" id="VSP_006664" description="In isoform 2." evidence="6">
    <original>TTLRSRIDQAQKH</original>
    <variation>MNVRARVEMLAKF</variation>
    <location>
        <begin position="230"/>
        <end position="242"/>
    </location>
</feature>
<feature type="modified residue" description="Phosphoserine" evidence="8">
    <location sequence="P09739-3">
        <position position="2"/>
    </location>
</feature>
<feature type="modified residue" description="Phosphoserine" evidence="8">
    <location sequence="P09739-6">
        <position position="2"/>
    </location>
</feature>
<feature type="modified residue" description="Phosphoserine" evidence="8">
    <location sequence="P09739-7">
        <position position="2"/>
    </location>
</feature>
<comment type="function">
    <text evidence="3">Troponin T is the tropomyosin-binding subunit of troponin, the thin filament regulatory complex which confers calcium-sensitivity to striated muscle actomyosin ATPase activity.</text>
</comment>
<comment type="alternative products">
    <event type="alternative splicing"/>
    <isoform>
        <id>P09739-1</id>
        <name>1</name>
        <name>Beta</name>
        <sequence type="displayed"/>
    </isoform>
    <isoform>
        <id>P09739-2</id>
        <name>2</name>
        <name>Alpha</name>
        <sequence type="described" ref="VSP_006664"/>
    </isoform>
    <isoform>
        <id>P09739-3</id>
        <name>3</name>
        <name>Ia-2</name>
        <sequence type="described" ref="VSP_006658"/>
    </isoform>
    <isoform>
        <id>P09739-4</id>
        <name>4</name>
        <name>Ib-1</name>
        <sequence type="described" ref="VSP_006659"/>
    </isoform>
    <isoform>
        <id>P09739-5</id>
        <name>5</name>
        <name>Ic-1</name>
        <sequence type="described" ref="VSP_006660"/>
    </isoform>
    <isoform>
        <id>P09739-6</id>
        <name>6</name>
        <name>IIa-1</name>
        <sequence type="described" ref="VSP_006661"/>
    </isoform>
    <isoform>
        <id>P09739-7</id>
        <name>7</name>
        <name>IVb</name>
        <sequence type="described" ref="VSP_006663"/>
    </isoform>
    <text evidence="4 5">Combinatorial alternative splicing of 5 short exons in the 5' region of this gene may generate up to 32 distinct N-terminal isoforms. These N-terminal isoforms may be further combined with one of two mutually exclusive C-terminal exons (alpha or beta) to produce up to 64 distinct isoforms. For simplicity, only individual splice events are explicitly described here.</text>
</comment>
<comment type="miscellaneous">
    <molecule>Isoform 2</molecule>
    <text evidence="7">Increased calcium sensitivity of myofilaments relative to isoform 1.</text>
</comment>
<comment type="miscellaneous">
    <molecule>Isoform 3</molecule>
    <text evidence="7">Lacks exon 4.</text>
</comment>
<comment type="miscellaneous">
    <molecule>Isoform 4</molecule>
    <text evidence="7">Lacks exon 5.</text>
</comment>
<comment type="miscellaneous">
    <molecule>Isoform 5</molecule>
    <text evidence="7">Lacks exon 6.</text>
</comment>
<comment type="miscellaneous">
    <molecule>Isoform 6</molecule>
    <text evidence="7">Lacks exon 7.</text>
</comment>
<comment type="miscellaneous">
    <molecule>Isoform 7</molecule>
    <text evidence="7">Lacks exon 8.</text>
</comment>
<comment type="similarity">
    <text evidence="7">Belongs to the troponin T family.</text>
</comment>
<keyword id="KW-0007">Acetylation</keyword>
<keyword id="KW-0025">Alternative splicing</keyword>
<keyword id="KW-0514">Muscle protein</keyword>
<keyword id="KW-0597">Phosphoprotein</keyword>
<keyword id="KW-1185">Reference proteome</keyword>
<protein>
    <recommendedName>
        <fullName>Troponin T, fast skeletal muscle</fullName>
        <shortName>TnTf</shortName>
    </recommendedName>
    <alternativeName>
        <fullName>Fast skeletal muscle troponin T</fullName>
        <shortName>fTnT</shortName>
    </alternativeName>
</protein>
<accession>P09739</accession>
<accession>P09740</accession>
<accession>Q304F4</accession>
<accession>Q4PPA0</accession>
<name>TNNT3_RAT</name>
<gene>
    <name type="primary">Tnnt3</name>
</gene>
<proteinExistence type="evidence at protein level"/>
<organism>
    <name type="scientific">Rattus norvegicus</name>
    <name type="common">Rat</name>
    <dbReference type="NCBI Taxonomy" id="10116"/>
    <lineage>
        <taxon>Eukaryota</taxon>
        <taxon>Metazoa</taxon>
        <taxon>Chordata</taxon>
        <taxon>Craniata</taxon>
        <taxon>Vertebrata</taxon>
        <taxon>Euteleostomi</taxon>
        <taxon>Mammalia</taxon>
        <taxon>Eutheria</taxon>
        <taxon>Euarchontoglires</taxon>
        <taxon>Glires</taxon>
        <taxon>Rodentia</taxon>
        <taxon>Myomorpha</taxon>
        <taxon>Muroidea</taxon>
        <taxon>Muridae</taxon>
        <taxon>Murinae</taxon>
        <taxon>Rattus</taxon>
    </lineage>
</organism>
<reference key="1">
    <citation type="journal article" date="1986" name="J. Mol. Biol.">
        <title>Complete nucleotide sequence of the fast skeletal troponin T gene. Alternatively spliced exons exhibit unusual interspecies divergence.</title>
        <authorList>
            <person name="Breitbart R.E."/>
            <person name="Nadal-Ginard B."/>
        </authorList>
    </citation>
    <scope>NUCLEOTIDE SEQUENCE [GENOMIC DNA]</scope>
    <scope>ALTERNATIVE SPLICING</scope>
</reference>
<reference key="2">
    <citation type="journal article" date="1985" name="Cell">
        <title>Intricate combinatorial patterns of exon splicing generate multiple regulated troponin T isoforms from a single gene.</title>
        <authorList>
            <person name="Breitbart R.E."/>
            <person name="Nguyen H.T."/>
            <person name="Medford R.M."/>
            <person name="Destree A.T."/>
            <person name="Mahdavi V."/>
            <person name="Nadal-Ginard B."/>
        </authorList>
    </citation>
    <scope>NUCLEOTIDE SEQUENCE [GENOMIC DNA]</scope>
    <scope>ALTERNATIVE SPLICING</scope>
</reference>
<reference key="3">
    <citation type="journal article" date="2006" name="Arch. Biochem. Biophys.">
        <title>Differences in myofilament calcium sensitivity in rat psoas fibers reconstituted with troponin T isoforms containing the alpha- and beta-exons.</title>
        <authorList>
            <person name="Gallon C.E."/>
            <person name="Tschirgi M.L."/>
            <person name="Chandra M."/>
        </authorList>
    </citation>
    <scope>NUCLEOTIDE SEQUENCE [MRNA] (ISOFORMS 1 AND 2)</scope>
    <scope>FUNCTION</scope>
    <source>
        <strain>Sprague-Dawley</strain>
        <tissue>Fast-twitch skeletal muscle</tissue>
    </source>
</reference>
<reference key="4">
    <citation type="journal article" date="2012" name="Nat. Commun.">
        <title>Quantitative maps of protein phosphorylation sites across 14 different rat organs and tissues.</title>
        <authorList>
            <person name="Lundby A."/>
            <person name="Secher A."/>
            <person name="Lage K."/>
            <person name="Nordsborg N.B."/>
            <person name="Dmytriyev A."/>
            <person name="Lundby C."/>
            <person name="Olsen J.V."/>
        </authorList>
    </citation>
    <scope>PHOSPHORYLATION [LARGE SCALE ANALYSIS] AT SER-2; SER-78; SER-149; SER-156; SER-157; SER-193 AND TYR-209</scope>
    <scope>PHOSPHORYLATION [LARGE SCALE ANALYSIS] AT SER-2 (ISOFORMS 3; 6 AND 7)</scope>
    <scope>IDENTIFICATION BY MASS SPECTROMETRY [LARGE SCALE ANALYSIS]</scope>
</reference>